<keyword id="KW-0963">Cytoplasm</keyword>
<keyword id="KW-0227">DNA damage</keyword>
<keyword id="KW-0233">DNA recombination</keyword>
<keyword id="KW-0234">DNA repair</keyword>
<keyword id="KW-0238">DNA-binding</keyword>
<keyword id="KW-0255">Endonuclease</keyword>
<keyword id="KW-0378">Hydrolase</keyword>
<keyword id="KW-0460">Magnesium</keyword>
<keyword id="KW-0479">Metal-binding</keyword>
<keyword id="KW-0540">Nuclease</keyword>
<accession>A6SUQ2</accession>
<gene>
    <name evidence="1" type="primary">ruvC</name>
    <name type="ordered locus">mma_0309</name>
</gene>
<protein>
    <recommendedName>
        <fullName evidence="1">Crossover junction endodeoxyribonuclease RuvC</fullName>
        <ecNumber evidence="1">3.1.21.10</ecNumber>
    </recommendedName>
    <alternativeName>
        <fullName evidence="1">Holliday junction nuclease RuvC</fullName>
    </alternativeName>
    <alternativeName>
        <fullName evidence="1">Holliday junction resolvase RuvC</fullName>
    </alternativeName>
</protein>
<reference key="1">
    <citation type="journal article" date="2007" name="PLoS Genet.">
        <title>Genome analysis of Minibacterium massiliensis highlights the convergent evolution of water-living bacteria.</title>
        <authorList>
            <person name="Audic S."/>
            <person name="Robert C."/>
            <person name="Campagna B."/>
            <person name="Parinello H."/>
            <person name="Claverie J.-M."/>
            <person name="Raoult D."/>
            <person name="Drancourt M."/>
        </authorList>
    </citation>
    <scope>NUCLEOTIDE SEQUENCE [LARGE SCALE GENOMIC DNA]</scope>
    <source>
        <strain>Marseille</strain>
    </source>
</reference>
<dbReference type="EC" id="3.1.21.10" evidence="1"/>
<dbReference type="EMBL" id="CP000269">
    <property type="protein sequence ID" value="ABR88445.1"/>
    <property type="molecule type" value="Genomic_DNA"/>
</dbReference>
<dbReference type="RefSeq" id="WP_012078174.1">
    <property type="nucleotide sequence ID" value="NC_009659.1"/>
</dbReference>
<dbReference type="SMR" id="A6SUQ2"/>
<dbReference type="STRING" id="375286.mma_0309"/>
<dbReference type="KEGG" id="mms:mma_0309"/>
<dbReference type="eggNOG" id="COG0817">
    <property type="taxonomic scope" value="Bacteria"/>
</dbReference>
<dbReference type="HOGENOM" id="CLU_091257_2_1_4"/>
<dbReference type="OrthoDB" id="9805499at2"/>
<dbReference type="Proteomes" id="UP000006388">
    <property type="component" value="Chromosome"/>
</dbReference>
<dbReference type="GO" id="GO:0005737">
    <property type="term" value="C:cytoplasm"/>
    <property type="evidence" value="ECO:0007669"/>
    <property type="project" value="UniProtKB-SubCell"/>
</dbReference>
<dbReference type="GO" id="GO:0048476">
    <property type="term" value="C:Holliday junction resolvase complex"/>
    <property type="evidence" value="ECO:0007669"/>
    <property type="project" value="UniProtKB-UniRule"/>
</dbReference>
<dbReference type="GO" id="GO:0008821">
    <property type="term" value="F:crossover junction DNA endonuclease activity"/>
    <property type="evidence" value="ECO:0007669"/>
    <property type="project" value="UniProtKB-UniRule"/>
</dbReference>
<dbReference type="GO" id="GO:0003677">
    <property type="term" value="F:DNA binding"/>
    <property type="evidence" value="ECO:0007669"/>
    <property type="project" value="UniProtKB-KW"/>
</dbReference>
<dbReference type="GO" id="GO:0000287">
    <property type="term" value="F:magnesium ion binding"/>
    <property type="evidence" value="ECO:0007669"/>
    <property type="project" value="UniProtKB-UniRule"/>
</dbReference>
<dbReference type="GO" id="GO:0006310">
    <property type="term" value="P:DNA recombination"/>
    <property type="evidence" value="ECO:0007669"/>
    <property type="project" value="UniProtKB-UniRule"/>
</dbReference>
<dbReference type="GO" id="GO:0006281">
    <property type="term" value="P:DNA repair"/>
    <property type="evidence" value="ECO:0007669"/>
    <property type="project" value="UniProtKB-UniRule"/>
</dbReference>
<dbReference type="CDD" id="cd16962">
    <property type="entry name" value="RuvC"/>
    <property type="match status" value="1"/>
</dbReference>
<dbReference type="FunFam" id="3.30.420.10:FF:000002">
    <property type="entry name" value="Crossover junction endodeoxyribonuclease RuvC"/>
    <property type="match status" value="1"/>
</dbReference>
<dbReference type="Gene3D" id="3.30.420.10">
    <property type="entry name" value="Ribonuclease H-like superfamily/Ribonuclease H"/>
    <property type="match status" value="1"/>
</dbReference>
<dbReference type="HAMAP" id="MF_00034">
    <property type="entry name" value="RuvC"/>
    <property type="match status" value="1"/>
</dbReference>
<dbReference type="InterPro" id="IPR012337">
    <property type="entry name" value="RNaseH-like_sf"/>
</dbReference>
<dbReference type="InterPro" id="IPR036397">
    <property type="entry name" value="RNaseH_sf"/>
</dbReference>
<dbReference type="InterPro" id="IPR020563">
    <property type="entry name" value="X-over_junc_endoDNase_Mg_BS"/>
</dbReference>
<dbReference type="InterPro" id="IPR002176">
    <property type="entry name" value="X-over_junc_endoDNase_RuvC"/>
</dbReference>
<dbReference type="NCBIfam" id="TIGR00228">
    <property type="entry name" value="ruvC"/>
    <property type="match status" value="1"/>
</dbReference>
<dbReference type="PANTHER" id="PTHR30194">
    <property type="entry name" value="CROSSOVER JUNCTION ENDODEOXYRIBONUCLEASE RUVC"/>
    <property type="match status" value="1"/>
</dbReference>
<dbReference type="PANTHER" id="PTHR30194:SF3">
    <property type="entry name" value="CROSSOVER JUNCTION ENDODEOXYRIBONUCLEASE RUVC"/>
    <property type="match status" value="1"/>
</dbReference>
<dbReference type="Pfam" id="PF02075">
    <property type="entry name" value="RuvC"/>
    <property type="match status" value="1"/>
</dbReference>
<dbReference type="PRINTS" id="PR00696">
    <property type="entry name" value="RSOLVASERUVC"/>
</dbReference>
<dbReference type="SUPFAM" id="SSF53098">
    <property type="entry name" value="Ribonuclease H-like"/>
    <property type="match status" value="1"/>
</dbReference>
<dbReference type="PROSITE" id="PS01321">
    <property type="entry name" value="RUVC"/>
    <property type="match status" value="1"/>
</dbReference>
<sequence>MKILGIDPGLRTTGFGVIEKHGNKLTYIASGTIKTPDADLPQRLKTILSSVSEVIATYHPDCAAIEKVFVNVNPQSTLLLGQARGAAICALVHADLLVAEYTALQVKQAVVGQGKAQKAQVQDMVQRLLKLSGLPGTDAADALGVAICHAHSGEALSVLGALAPELARKGLRVRGGRLVG</sequence>
<proteinExistence type="inferred from homology"/>
<comment type="function">
    <text evidence="1">The RuvA-RuvB-RuvC complex processes Holliday junction (HJ) DNA during genetic recombination and DNA repair. Endonuclease that resolves HJ intermediates. Cleaves cruciform DNA by making single-stranded nicks across the HJ at symmetrical positions within the homologous arms, yielding a 5'-phosphate and a 3'-hydroxyl group; requires a central core of homology in the junction. The consensus cleavage sequence is 5'-(A/T)TT(C/G)-3'. Cleavage occurs on the 3'-side of the TT dinucleotide at the point of strand exchange. HJ branch migration catalyzed by RuvA-RuvB allows RuvC to scan DNA until it finds its consensus sequence, where it cleaves and resolves the cruciform DNA.</text>
</comment>
<comment type="catalytic activity">
    <reaction evidence="1">
        <text>Endonucleolytic cleavage at a junction such as a reciprocal single-stranded crossover between two homologous DNA duplexes (Holliday junction).</text>
        <dbReference type="EC" id="3.1.21.10"/>
    </reaction>
</comment>
<comment type="cofactor">
    <cofactor evidence="1">
        <name>Mg(2+)</name>
        <dbReference type="ChEBI" id="CHEBI:18420"/>
    </cofactor>
    <text evidence="1">Binds 2 Mg(2+) ion per subunit.</text>
</comment>
<comment type="subunit">
    <text evidence="1">Homodimer which binds Holliday junction (HJ) DNA. The HJ becomes 2-fold symmetrical on binding to RuvC with unstacked arms; it has a different conformation from HJ DNA in complex with RuvA. In the full resolvosome a probable DNA-RuvA(4)-RuvB(12)-RuvC(2) complex forms which resolves the HJ.</text>
</comment>
<comment type="subcellular location">
    <subcellularLocation>
        <location evidence="1">Cytoplasm</location>
    </subcellularLocation>
</comment>
<comment type="similarity">
    <text evidence="1">Belongs to the RuvC family.</text>
</comment>
<name>RUVC_JANMA</name>
<evidence type="ECO:0000255" key="1">
    <source>
        <dbReference type="HAMAP-Rule" id="MF_00034"/>
    </source>
</evidence>
<feature type="chain" id="PRO_1000002769" description="Crossover junction endodeoxyribonuclease RuvC">
    <location>
        <begin position="1"/>
        <end position="180"/>
    </location>
</feature>
<feature type="active site" evidence="1">
    <location>
        <position position="7"/>
    </location>
</feature>
<feature type="active site" evidence="1">
    <location>
        <position position="66"/>
    </location>
</feature>
<feature type="active site" evidence="1">
    <location>
        <position position="138"/>
    </location>
</feature>
<feature type="binding site" evidence="1">
    <location>
        <position position="7"/>
    </location>
    <ligand>
        <name>Mg(2+)</name>
        <dbReference type="ChEBI" id="CHEBI:18420"/>
        <label>1</label>
    </ligand>
</feature>
<feature type="binding site" evidence="1">
    <location>
        <position position="66"/>
    </location>
    <ligand>
        <name>Mg(2+)</name>
        <dbReference type="ChEBI" id="CHEBI:18420"/>
        <label>2</label>
    </ligand>
</feature>
<feature type="binding site" evidence="1">
    <location>
        <position position="138"/>
    </location>
    <ligand>
        <name>Mg(2+)</name>
        <dbReference type="ChEBI" id="CHEBI:18420"/>
        <label>1</label>
    </ligand>
</feature>
<organism>
    <name type="scientific">Janthinobacterium sp. (strain Marseille)</name>
    <name type="common">Minibacterium massiliensis</name>
    <dbReference type="NCBI Taxonomy" id="375286"/>
    <lineage>
        <taxon>Bacteria</taxon>
        <taxon>Pseudomonadati</taxon>
        <taxon>Pseudomonadota</taxon>
        <taxon>Betaproteobacteria</taxon>
        <taxon>Burkholderiales</taxon>
        <taxon>Oxalobacteraceae</taxon>
        <taxon>Janthinobacterium</taxon>
    </lineage>
</organism>